<dbReference type="EMBL" id="AACD01000129">
    <property type="protein sequence ID" value="EAA62018.1"/>
    <property type="status" value="ALT_SEQ"/>
    <property type="molecule type" value="Genomic_DNA"/>
</dbReference>
<dbReference type="EMBL" id="BN001304">
    <property type="protein sequence ID" value="CBF79382.1"/>
    <property type="status" value="ALT_SEQ"/>
    <property type="molecule type" value="Genomic_DNA"/>
</dbReference>
<dbReference type="RefSeq" id="XP_680707.1">
    <property type="nucleotide sequence ID" value="XM_675615.1"/>
</dbReference>
<dbReference type="STRING" id="227321.Q5AW92"/>
<dbReference type="KEGG" id="ani:ANIA_07438"/>
<dbReference type="VEuPathDB" id="FungiDB:AN7438"/>
<dbReference type="eggNOG" id="KOG1875">
    <property type="taxonomic scope" value="Eukaryota"/>
</dbReference>
<dbReference type="HOGENOM" id="CLU_003573_1_1_1"/>
<dbReference type="InParanoid" id="Q5AW92"/>
<dbReference type="OrthoDB" id="205099at2759"/>
<dbReference type="Proteomes" id="UP000000560">
    <property type="component" value="Chromosome IV"/>
</dbReference>
<dbReference type="GO" id="GO:0070847">
    <property type="term" value="C:core mediator complex"/>
    <property type="evidence" value="ECO:0000318"/>
    <property type="project" value="GO_Central"/>
</dbReference>
<dbReference type="GO" id="GO:0016592">
    <property type="term" value="C:mediator complex"/>
    <property type="evidence" value="ECO:0000318"/>
    <property type="project" value="GO_Central"/>
</dbReference>
<dbReference type="GO" id="GO:0003712">
    <property type="term" value="F:transcription coregulator activity"/>
    <property type="evidence" value="ECO:0000318"/>
    <property type="project" value="GO_Central"/>
</dbReference>
<dbReference type="GO" id="GO:0006357">
    <property type="term" value="P:regulation of transcription by RNA polymerase II"/>
    <property type="evidence" value="ECO:0000318"/>
    <property type="project" value="GO_Central"/>
</dbReference>
<dbReference type="InterPro" id="IPR055122">
    <property type="entry name" value="Med14_N"/>
</dbReference>
<dbReference type="InterPro" id="IPR013947">
    <property type="entry name" value="Mediator_Med14"/>
</dbReference>
<dbReference type="PANTHER" id="PTHR12809">
    <property type="entry name" value="MEDIATOR COMPLEX SUBUNIT"/>
    <property type="match status" value="1"/>
</dbReference>
<dbReference type="PANTHER" id="PTHR12809:SF2">
    <property type="entry name" value="MEDIATOR OF RNA POLYMERASE II TRANSCRIPTION SUBUNIT 14"/>
    <property type="match status" value="1"/>
</dbReference>
<dbReference type="Pfam" id="PF08638">
    <property type="entry name" value="Med14"/>
    <property type="match status" value="1"/>
</dbReference>
<feature type="chain" id="PRO_0000304602" description="Mediator of RNA polymerase II transcription subunit 14">
    <location>
        <begin position="1"/>
        <end position="1103"/>
    </location>
</feature>
<feature type="region of interest" description="Disordered" evidence="2">
    <location>
        <begin position="22"/>
        <end position="61"/>
    </location>
</feature>
<feature type="region of interest" description="Disordered" evidence="2">
    <location>
        <begin position="1043"/>
        <end position="1067"/>
    </location>
</feature>
<feature type="compositionally biased region" description="Polar residues" evidence="2">
    <location>
        <begin position="23"/>
        <end position="36"/>
    </location>
</feature>
<gene>
    <name type="primary">rgr1</name>
    <name type="synonym">med14</name>
    <name type="ORF">AN7438</name>
</gene>
<comment type="function">
    <text evidence="1">Component of the Mediator complex, a coactivator involved in the regulated transcription of nearly all RNA polymerase II-dependent genes. Mediator functions as a bridge to convey information from gene-specific regulatory proteins to the basal RNA polymerase II transcription machinery. Mediator is recruited to promoters by direct interactions with regulatory proteins and serves as a scaffold for the assembly of a functional preinitiation complex with RNA polymerase II and the general transcription factors (By similarity).</text>
</comment>
<comment type="subunit">
    <text evidence="1">Component of the Mediator complex.</text>
</comment>
<comment type="subcellular location">
    <subcellularLocation>
        <location evidence="3">Nucleus</location>
    </subcellularLocation>
</comment>
<comment type="similarity">
    <text evidence="3">Belongs to the Mediator complex subunit 14 family.</text>
</comment>
<comment type="sequence caution" evidence="3">
    <conflict type="erroneous gene model prediction">
        <sequence resource="EMBL-CDS" id="CBF79382"/>
    </conflict>
</comment>
<comment type="sequence caution" evidence="3">
    <conflict type="erroneous initiation">
        <sequence resource="EMBL-CDS" id="CBF79382"/>
    </conflict>
    <text>Truncated N-terminus.</text>
</comment>
<comment type="sequence caution" evidence="3">
    <conflict type="erroneous gene model prediction">
        <sequence resource="EMBL-CDS" id="EAA62018"/>
    </conflict>
</comment>
<comment type="sequence caution" evidence="3">
    <conflict type="erroneous initiation">
        <sequence resource="EMBL-CDS" id="EAA62018"/>
    </conflict>
    <text>Truncated N-terminus.</text>
</comment>
<reference key="1">
    <citation type="journal article" date="2005" name="Nature">
        <title>Sequencing of Aspergillus nidulans and comparative analysis with A. fumigatus and A. oryzae.</title>
        <authorList>
            <person name="Galagan J.E."/>
            <person name="Calvo S.E."/>
            <person name="Cuomo C."/>
            <person name="Ma L.-J."/>
            <person name="Wortman J.R."/>
            <person name="Batzoglou S."/>
            <person name="Lee S.-I."/>
            <person name="Bastuerkmen M."/>
            <person name="Spevak C.C."/>
            <person name="Clutterbuck J."/>
            <person name="Kapitonov V."/>
            <person name="Jurka J."/>
            <person name="Scazzocchio C."/>
            <person name="Farman M.L."/>
            <person name="Butler J."/>
            <person name="Purcell S."/>
            <person name="Harris S."/>
            <person name="Braus G.H."/>
            <person name="Draht O."/>
            <person name="Busch S."/>
            <person name="D'Enfert C."/>
            <person name="Bouchier C."/>
            <person name="Goldman G.H."/>
            <person name="Bell-Pedersen D."/>
            <person name="Griffiths-Jones S."/>
            <person name="Doonan J.H."/>
            <person name="Yu J."/>
            <person name="Vienken K."/>
            <person name="Pain A."/>
            <person name="Freitag M."/>
            <person name="Selker E.U."/>
            <person name="Archer D.B."/>
            <person name="Penalva M.A."/>
            <person name="Oakley B.R."/>
            <person name="Momany M."/>
            <person name="Tanaka T."/>
            <person name="Kumagai T."/>
            <person name="Asai K."/>
            <person name="Machida M."/>
            <person name="Nierman W.C."/>
            <person name="Denning D.W."/>
            <person name="Caddick M.X."/>
            <person name="Hynes M."/>
            <person name="Paoletti M."/>
            <person name="Fischer R."/>
            <person name="Miller B.L."/>
            <person name="Dyer P.S."/>
            <person name="Sachs M.S."/>
            <person name="Osmani S.A."/>
            <person name="Birren B.W."/>
        </authorList>
    </citation>
    <scope>NUCLEOTIDE SEQUENCE [LARGE SCALE GENOMIC DNA]</scope>
    <source>
        <strain>FGSC A4 / ATCC 38163 / CBS 112.46 / NRRL 194 / M139</strain>
    </source>
</reference>
<reference key="2">
    <citation type="journal article" date="2009" name="Fungal Genet. Biol.">
        <title>The 2008 update of the Aspergillus nidulans genome annotation: a community effort.</title>
        <authorList>
            <person name="Wortman J.R."/>
            <person name="Gilsenan J.M."/>
            <person name="Joardar V."/>
            <person name="Deegan J."/>
            <person name="Clutterbuck J."/>
            <person name="Andersen M.R."/>
            <person name="Archer D."/>
            <person name="Bencina M."/>
            <person name="Braus G."/>
            <person name="Coutinho P."/>
            <person name="von Dohren H."/>
            <person name="Doonan J."/>
            <person name="Driessen A.J."/>
            <person name="Durek P."/>
            <person name="Espeso E."/>
            <person name="Fekete E."/>
            <person name="Flipphi M."/>
            <person name="Estrada C.G."/>
            <person name="Geysens S."/>
            <person name="Goldman G."/>
            <person name="de Groot P.W."/>
            <person name="Hansen K."/>
            <person name="Harris S.D."/>
            <person name="Heinekamp T."/>
            <person name="Helmstaedt K."/>
            <person name="Henrissat B."/>
            <person name="Hofmann G."/>
            <person name="Homan T."/>
            <person name="Horio T."/>
            <person name="Horiuchi H."/>
            <person name="James S."/>
            <person name="Jones M."/>
            <person name="Karaffa L."/>
            <person name="Karanyi Z."/>
            <person name="Kato M."/>
            <person name="Keller N."/>
            <person name="Kelly D.E."/>
            <person name="Kiel J.A."/>
            <person name="Kim J.M."/>
            <person name="van der Klei I.J."/>
            <person name="Klis F.M."/>
            <person name="Kovalchuk A."/>
            <person name="Krasevec N."/>
            <person name="Kubicek C.P."/>
            <person name="Liu B."/>
            <person name="Maccabe A."/>
            <person name="Meyer V."/>
            <person name="Mirabito P."/>
            <person name="Miskei M."/>
            <person name="Mos M."/>
            <person name="Mullins J."/>
            <person name="Nelson D.R."/>
            <person name="Nielsen J."/>
            <person name="Oakley B.R."/>
            <person name="Osmani S.A."/>
            <person name="Pakula T."/>
            <person name="Paszewski A."/>
            <person name="Paulsen I."/>
            <person name="Pilsyk S."/>
            <person name="Pocsi I."/>
            <person name="Punt P.J."/>
            <person name="Ram A.F."/>
            <person name="Ren Q."/>
            <person name="Robellet X."/>
            <person name="Robson G."/>
            <person name="Seiboth B."/>
            <person name="van Solingen P."/>
            <person name="Specht T."/>
            <person name="Sun J."/>
            <person name="Taheri-Talesh N."/>
            <person name="Takeshita N."/>
            <person name="Ussery D."/>
            <person name="vanKuyk P.A."/>
            <person name="Visser H."/>
            <person name="van de Vondervoort P.J."/>
            <person name="de Vries R.P."/>
            <person name="Walton J."/>
            <person name="Xiang X."/>
            <person name="Xiong Y."/>
            <person name="Zeng A.P."/>
            <person name="Brandt B.W."/>
            <person name="Cornell M.J."/>
            <person name="van den Hondel C.A."/>
            <person name="Visser J."/>
            <person name="Oliver S.G."/>
            <person name="Turner G."/>
        </authorList>
    </citation>
    <scope>GENOME REANNOTATION</scope>
    <source>
        <strain>FGSC A4 / ATCC 38163 / CBS 112.46 / NRRL 194 / M139</strain>
    </source>
</reference>
<name>MED14_EMENI</name>
<protein>
    <recommendedName>
        <fullName>Mediator of RNA polymerase II transcription subunit 14</fullName>
    </recommendedName>
    <alternativeName>
        <fullName>Mediator complex subunit 14</fullName>
    </alternativeName>
</protein>
<evidence type="ECO:0000250" key="1"/>
<evidence type="ECO:0000256" key="2">
    <source>
        <dbReference type="SAM" id="MobiDB-lite"/>
    </source>
</evidence>
<evidence type="ECO:0000305" key="3"/>
<proteinExistence type="inferred from homology"/>
<accession>Q5AW92</accession>
<accession>C8VBB2</accession>
<sequence length="1103" mass="123042">MPGVIMNQDNINGRGLGLHDQLNGVSSAPAGSSQLGNPVGLHNGSLPTNGVQHPDSRGSDENYRTKMMLSASGDPPELQHIVQGFFPLAKLLNRSAQQCWNDLADLVAELAEIQVPSHDSNFSPISPNTKVLGNQSPENVRKKLRALEFAQKKRGEFIKLLVLSQWSRQAADVSRLIDIQNFIRTQHQAYAGALQCMGDMKRDLVRAQVANPDLNTALEVLLRGEVVSMPDLGYRPPKPLTPKSTLKKMRKINRVISTRLALHDDIPLAFQKYRVHDGRVTFVVPGEFELDLSIGEEDVTSQFFFVDIRFLFSPSPSIPAGRMLSELDIKINDTLRNGGLSECFNWLHNLILTNKINILARQASELSRSLWSNVLRSELLHRTLVLQYWASKPNTKSWLEIGIRRGPRESTIGGMRPPSLGLRWIRDGQEVNSDDVEFDTDSLSVDRLLRSAIALHISHILSSAFRRISEKLLYSNGSLSLHAYLTRTEPGDCQLDVQLTASRRLRVAIEPLSGAIVLAATPNTLERVDTDRNMDRSTIDDIVSRVGRLRCAAAIEEVESQVKMLGFISVSPRNVRIDARSLFPANVLRFSFFWHHHWERSWLLAATSSMDGDKWWVVQTPSADSVTINRSLDAAVHHASSAVRSAQVICNLLLPAEQPDYSSLADLGHCLSGFLAIYANARFLQDLQFIKIWPHLEHLRIGPGLQVPDLNIEYEATKLPEALRVALPAGFKRKTFVKKTIRLAFHGIDRCRKVAIMVAYGNLSTSFPALGDLVAEDDHSLVLQKTGTGFALRLLASPGYPVVVALLESLQRLECVLSVYEILRRKKMDARFLSLSRLGFAYGPNKELLAQLDIGETQPQLPTEMDPLKLAFRTGHLFHYRLSISFDHSNPHRRIQGPLASNLNRPTAEAGLDTLTEILSFTLPLMQALDRFMANPSRNESSIVHVTVRNATSFQIHYPYEKCRLRLVAHQHQNQPVWVLRDVLSFQDGSCEPEFKHKLQERLYNSKGTGWRGLGNGVIAEPDHIGDLLDELDRCLASTKANTTPKALDSRTSHDAPAANNQSPAIRPEKSVEAADMHGGFVNRNLQQKAGPASQKTDVITID</sequence>
<organism>
    <name type="scientific">Emericella nidulans (strain FGSC A4 / ATCC 38163 / CBS 112.46 / NRRL 194 / M139)</name>
    <name type="common">Aspergillus nidulans</name>
    <dbReference type="NCBI Taxonomy" id="227321"/>
    <lineage>
        <taxon>Eukaryota</taxon>
        <taxon>Fungi</taxon>
        <taxon>Dikarya</taxon>
        <taxon>Ascomycota</taxon>
        <taxon>Pezizomycotina</taxon>
        <taxon>Eurotiomycetes</taxon>
        <taxon>Eurotiomycetidae</taxon>
        <taxon>Eurotiales</taxon>
        <taxon>Aspergillaceae</taxon>
        <taxon>Aspergillus</taxon>
        <taxon>Aspergillus subgen. Nidulantes</taxon>
    </lineage>
</organism>
<keyword id="KW-0010">Activator</keyword>
<keyword id="KW-0539">Nucleus</keyword>
<keyword id="KW-1185">Reference proteome</keyword>
<keyword id="KW-0804">Transcription</keyword>
<keyword id="KW-0805">Transcription regulation</keyword>